<dbReference type="EMBL" id="CP000911">
    <property type="protein sequence ID" value="ABY38471.1"/>
    <property type="molecule type" value="Genomic_DNA"/>
</dbReference>
<dbReference type="RefSeq" id="WP_006071094.1">
    <property type="nucleotide sequence ID" value="NC_010169.1"/>
</dbReference>
<dbReference type="KEGG" id="bmt:BSUIS_A1433"/>
<dbReference type="HOGENOM" id="CLU_008142_4_2_5"/>
<dbReference type="Proteomes" id="UP000008545">
    <property type="component" value="Chromosome I"/>
</dbReference>
<dbReference type="GO" id="GO:0005886">
    <property type="term" value="C:plasma membrane"/>
    <property type="evidence" value="ECO:0007669"/>
    <property type="project" value="UniProtKB-SubCell"/>
</dbReference>
<dbReference type="GO" id="GO:0015079">
    <property type="term" value="F:potassium ion transmembrane transporter activity"/>
    <property type="evidence" value="ECO:0007669"/>
    <property type="project" value="UniProtKB-UniRule"/>
</dbReference>
<dbReference type="GO" id="GO:0015293">
    <property type="term" value="F:symporter activity"/>
    <property type="evidence" value="ECO:0007669"/>
    <property type="project" value="UniProtKB-UniRule"/>
</dbReference>
<dbReference type="HAMAP" id="MF_01522">
    <property type="entry name" value="Kup"/>
    <property type="match status" value="1"/>
</dbReference>
<dbReference type="InterPro" id="IPR003855">
    <property type="entry name" value="K+_transporter"/>
</dbReference>
<dbReference type="InterPro" id="IPR053952">
    <property type="entry name" value="K_trans_C"/>
</dbReference>
<dbReference type="InterPro" id="IPR053951">
    <property type="entry name" value="K_trans_N"/>
</dbReference>
<dbReference type="InterPro" id="IPR023051">
    <property type="entry name" value="Kup"/>
</dbReference>
<dbReference type="PANTHER" id="PTHR30540:SF79">
    <property type="entry name" value="LOW AFFINITY POTASSIUM TRANSPORT SYSTEM PROTEIN KUP"/>
    <property type="match status" value="1"/>
</dbReference>
<dbReference type="PANTHER" id="PTHR30540">
    <property type="entry name" value="OSMOTIC STRESS POTASSIUM TRANSPORTER"/>
    <property type="match status" value="1"/>
</dbReference>
<dbReference type="Pfam" id="PF02705">
    <property type="entry name" value="K_trans"/>
    <property type="match status" value="1"/>
</dbReference>
<dbReference type="Pfam" id="PF22776">
    <property type="entry name" value="K_trans_C"/>
    <property type="match status" value="1"/>
</dbReference>
<protein>
    <recommendedName>
        <fullName evidence="1">Probable potassium transport system protein Kup</fullName>
    </recommendedName>
</protein>
<comment type="function">
    <text evidence="1">Transport of potassium into the cell. Likely operates as a K(+):H(+) symporter.</text>
</comment>
<comment type="catalytic activity">
    <reaction evidence="1">
        <text>K(+)(in) + H(+)(in) = K(+)(out) + H(+)(out)</text>
        <dbReference type="Rhea" id="RHEA:28490"/>
        <dbReference type="ChEBI" id="CHEBI:15378"/>
        <dbReference type="ChEBI" id="CHEBI:29103"/>
    </reaction>
    <physiologicalReaction direction="right-to-left" evidence="1">
        <dbReference type="Rhea" id="RHEA:28492"/>
    </physiologicalReaction>
</comment>
<comment type="subcellular location">
    <subcellularLocation>
        <location evidence="1">Cell inner membrane</location>
        <topology evidence="1">Multi-pass membrane protein</topology>
    </subcellularLocation>
</comment>
<comment type="similarity">
    <text evidence="1">Belongs to the HAK/KUP transporter (TC 2.A.72) family.</text>
</comment>
<feature type="chain" id="PRO_1000087557" description="Probable potassium transport system protein Kup">
    <location>
        <begin position="1"/>
        <end position="651"/>
    </location>
</feature>
<feature type="transmembrane region" description="Helical" evidence="1">
    <location>
        <begin position="41"/>
        <end position="61"/>
    </location>
</feature>
<feature type="transmembrane region" description="Helical" evidence="1">
    <location>
        <begin position="82"/>
        <end position="102"/>
    </location>
</feature>
<feature type="transmembrane region" description="Helical" evidence="1">
    <location>
        <begin position="130"/>
        <end position="150"/>
    </location>
</feature>
<feature type="transmembrane region" description="Helical" evidence="1">
    <location>
        <begin position="163"/>
        <end position="183"/>
    </location>
</feature>
<feature type="transmembrane region" description="Helical" evidence="1">
    <location>
        <begin position="194"/>
        <end position="214"/>
    </location>
</feature>
<feature type="transmembrane region" description="Helical" evidence="1">
    <location>
        <begin position="235"/>
        <end position="255"/>
    </location>
</feature>
<feature type="transmembrane region" description="Helical" evidence="1">
    <location>
        <begin position="276"/>
        <end position="296"/>
    </location>
</feature>
<feature type="transmembrane region" description="Helical" evidence="1">
    <location>
        <begin position="309"/>
        <end position="329"/>
    </location>
</feature>
<feature type="transmembrane region" description="Helical" evidence="1">
    <location>
        <begin position="366"/>
        <end position="386"/>
    </location>
</feature>
<feature type="transmembrane region" description="Helical" evidence="1">
    <location>
        <begin position="395"/>
        <end position="415"/>
    </location>
</feature>
<feature type="transmembrane region" description="Helical" evidence="1">
    <location>
        <begin position="426"/>
        <end position="446"/>
    </location>
</feature>
<feature type="transmembrane region" description="Helical" evidence="1">
    <location>
        <begin position="450"/>
        <end position="470"/>
    </location>
</feature>
<evidence type="ECO:0000255" key="1">
    <source>
        <dbReference type="HAMAP-Rule" id="MF_01522"/>
    </source>
</evidence>
<proteinExistence type="inferred from homology"/>
<sequence length="651" mass="70515">MSGELNGNDTSAQAAVSAGSVLEGAAFADEGEQHNESMKTLVLGALGVVYGDIGTSPIYAFREALHAAATNGILARSDILGVVSLIFWALTLVVTVKYVLFVLRADNNGEGGILSLMALVRAALKGRPDLILGVGICGAALFFGDAVITPAISVLSAMEGLEIVAPNLTPFVVPATVVILVTLFSVQKLGTGRVAIVFGPIMALWFVALGASGLWHIFDDPTVMAALNPYYAVRFLTVSPAVAFVTVGAVFLAMTGAEALYADLGHFGRKPIVRAWLWIVFPCLLLNYFGQAAFILSHGEAAALPFFQMIPSFALWPMVLLATAATVIASQAVITGAYSVARQAVQLNILPRLEIQHTSEKLHGQIYIPRVNLLLGLAVVILVLGFEKSSNLAAAYGIAVTGNMLVTTVLLYIVMTRIWNWRVSRALPIILGFLVIDMLFFSANIIKVHEGGWASIGIATVLVLIMWTWVRGTRHLFQKTRKAEVPLDLIVEQMAKRPPTIVPGTAVFLTGDPKSAPTALMHSLKHYKVLHENNVILTVVTASKPWVASADRARLSQYNERFMLVTLTFGYMQQPNILRALGLCRRLGWKFDIMTTSFFLSRRSLKASVHSGMPLWQDKLFILLARTASDATEYFQIPTGRVVEIGTQVNI</sequence>
<gene>
    <name evidence="1" type="primary">kup</name>
    <name type="ordered locus">BSUIS_A1433</name>
</gene>
<keyword id="KW-0997">Cell inner membrane</keyword>
<keyword id="KW-1003">Cell membrane</keyword>
<keyword id="KW-0406">Ion transport</keyword>
<keyword id="KW-0472">Membrane</keyword>
<keyword id="KW-0630">Potassium</keyword>
<keyword id="KW-0633">Potassium transport</keyword>
<keyword id="KW-0769">Symport</keyword>
<keyword id="KW-0812">Transmembrane</keyword>
<keyword id="KW-1133">Transmembrane helix</keyword>
<keyword id="KW-0813">Transport</keyword>
<reference key="1">
    <citation type="submission" date="2007-12" db="EMBL/GenBank/DDBJ databases">
        <title>Brucella suis ATCC 23445 whole genome shotgun sequencing project.</title>
        <authorList>
            <person name="Setubal J.C."/>
            <person name="Bowns C."/>
            <person name="Boyle S."/>
            <person name="Crasta O.R."/>
            <person name="Czar M.J."/>
            <person name="Dharmanolla C."/>
            <person name="Gillespie J.J."/>
            <person name="Kenyon R.W."/>
            <person name="Lu J."/>
            <person name="Mane S."/>
            <person name="Mohapatra S."/>
            <person name="Nagrani S."/>
            <person name="Purkayastha A."/>
            <person name="Rajasimha H.K."/>
            <person name="Shallom J.M."/>
            <person name="Shallom S."/>
            <person name="Shukla M."/>
            <person name="Snyder E.E."/>
            <person name="Sobral B.W."/>
            <person name="Wattam A.R."/>
            <person name="Will R."/>
            <person name="Williams K."/>
            <person name="Yoo H."/>
            <person name="Bruce D."/>
            <person name="Detter C."/>
            <person name="Munk C."/>
            <person name="Brettin T.S."/>
        </authorList>
    </citation>
    <scope>NUCLEOTIDE SEQUENCE [LARGE SCALE GENOMIC DNA]</scope>
    <source>
        <strain>ATCC 23445 / NCTC 10510</strain>
    </source>
</reference>
<organism>
    <name type="scientific">Brucella suis (strain ATCC 23445 / NCTC 10510)</name>
    <dbReference type="NCBI Taxonomy" id="470137"/>
    <lineage>
        <taxon>Bacteria</taxon>
        <taxon>Pseudomonadati</taxon>
        <taxon>Pseudomonadota</taxon>
        <taxon>Alphaproteobacteria</taxon>
        <taxon>Hyphomicrobiales</taxon>
        <taxon>Brucellaceae</taxon>
        <taxon>Brucella/Ochrobactrum group</taxon>
        <taxon>Brucella</taxon>
    </lineage>
</organism>
<name>KUP_BRUSI</name>
<accession>B0CHH0</accession>